<evidence type="ECO:0000255" key="1">
    <source>
        <dbReference type="HAMAP-Rule" id="MF_00764"/>
    </source>
</evidence>
<sequence length="147" mass="16688">MDTLTAIGRWLAKQHVVTWCVHHEGELWCANAFYLFDAQNVALYLLTDDKTRHAQMSGACAPVAGTVNGQPKTVARIRGVQFKGEIRRLEGQESDAARKAYLRRFPVARVLPAPVWEIRLDEIKFTDNTLGFGKKLHWLRDSRAQQA</sequence>
<reference key="1">
    <citation type="journal article" date="2011" name="J. Bacteriol.">
        <title>Comparative genomics of 28 Salmonella enterica isolates: evidence for CRISPR-mediated adaptive sublineage evolution.</title>
        <authorList>
            <person name="Fricke W.F."/>
            <person name="Mammel M.K."/>
            <person name="McDermott P.F."/>
            <person name="Tartera C."/>
            <person name="White D.G."/>
            <person name="Leclerc J.E."/>
            <person name="Ravel J."/>
            <person name="Cebula T.A."/>
        </authorList>
    </citation>
    <scope>NUCLEOTIDE SEQUENCE [LARGE SCALE GENOMIC DNA]</scope>
    <source>
        <strain>SL476</strain>
    </source>
</reference>
<feature type="chain" id="PRO_1000198365" description="UPF0306 protein YhbP">
    <location>
        <begin position="1"/>
        <end position="147"/>
    </location>
</feature>
<gene>
    <name evidence="1" type="primary">yhbP</name>
    <name type="ordered locus">SeHA_C3566</name>
</gene>
<organism>
    <name type="scientific">Salmonella heidelberg (strain SL476)</name>
    <dbReference type="NCBI Taxonomy" id="454169"/>
    <lineage>
        <taxon>Bacteria</taxon>
        <taxon>Pseudomonadati</taxon>
        <taxon>Pseudomonadota</taxon>
        <taxon>Gammaproteobacteria</taxon>
        <taxon>Enterobacterales</taxon>
        <taxon>Enterobacteriaceae</taxon>
        <taxon>Salmonella</taxon>
    </lineage>
</organism>
<dbReference type="EMBL" id="CP001120">
    <property type="protein sequence ID" value="ACF67514.1"/>
    <property type="molecule type" value="Genomic_DNA"/>
</dbReference>
<dbReference type="RefSeq" id="WP_000380404.1">
    <property type="nucleotide sequence ID" value="NC_011083.1"/>
</dbReference>
<dbReference type="SMR" id="B4TIZ3"/>
<dbReference type="KEGG" id="seh:SeHA_C3566"/>
<dbReference type="HOGENOM" id="CLU_105087_3_0_6"/>
<dbReference type="Proteomes" id="UP000001866">
    <property type="component" value="Chromosome"/>
</dbReference>
<dbReference type="Gene3D" id="2.30.110.10">
    <property type="entry name" value="Electron Transport, Fmn-binding Protein, Chain A"/>
    <property type="match status" value="1"/>
</dbReference>
<dbReference type="HAMAP" id="MF_00764">
    <property type="entry name" value="UPF0306"/>
    <property type="match status" value="1"/>
</dbReference>
<dbReference type="InterPro" id="IPR012349">
    <property type="entry name" value="Split_barrel_FMN-bd"/>
</dbReference>
<dbReference type="InterPro" id="IPR011194">
    <property type="entry name" value="UPF0306"/>
</dbReference>
<dbReference type="NCBIfam" id="NF002900">
    <property type="entry name" value="PRK03467.1"/>
    <property type="match status" value="1"/>
</dbReference>
<dbReference type="PIRSF" id="PIRSF009554">
    <property type="entry name" value="UCP009554"/>
    <property type="match status" value="1"/>
</dbReference>
<dbReference type="SUPFAM" id="SSF50475">
    <property type="entry name" value="FMN-binding split barrel"/>
    <property type="match status" value="1"/>
</dbReference>
<comment type="similarity">
    <text evidence="1">Belongs to the UPF0306 family.</text>
</comment>
<name>YHBP_SALHS</name>
<accession>B4TIZ3</accession>
<protein>
    <recommendedName>
        <fullName evidence="1">UPF0306 protein YhbP</fullName>
    </recommendedName>
</protein>
<proteinExistence type="inferred from homology"/>